<evidence type="ECO:0000250" key="1"/>
<evidence type="ECO:0000250" key="2">
    <source>
        <dbReference type="UniProtKB" id="Q04439"/>
    </source>
</evidence>
<evidence type="ECO:0000255" key="3"/>
<evidence type="ECO:0000255" key="4">
    <source>
        <dbReference type="PROSITE-ProRule" id="PRU00192"/>
    </source>
</evidence>
<evidence type="ECO:0000255" key="5">
    <source>
        <dbReference type="PROSITE-ProRule" id="PRU00782"/>
    </source>
</evidence>
<evidence type="ECO:0000255" key="6">
    <source>
        <dbReference type="PROSITE-ProRule" id="PRU01093"/>
    </source>
</evidence>
<evidence type="ECO:0000256" key="7">
    <source>
        <dbReference type="SAM" id="MobiDB-lite"/>
    </source>
</evidence>
<evidence type="ECO:0000305" key="8"/>
<sequence length="1219" mass="136899">MAILKRGARKKVHQEPAKRSANIKKATFDSSKKKEVGVSDLTLLSKISDEAINENLKKRFLNATIYTYIGHVLISVNPFRDLGIYTDAVMNEYKGKNRLEVPPHVFAIAESMYYNMKSYNENQCVIISGESGAGKTEAAKRIMQYIAAASSTHTESIGKIKDMVLATNPLLESFGCAKTLRNNNSSRHGKYLEIKFNNQFEPCAGNITNYLLEKQRVVSQIKNERNFHIFYQFTKGASDAYRQTFGVQKPEQYVYTAAAGCISAETIDDLQDYQETLKAMRVIGLGQEEQDQIFRMLAAILWIGNVSFIENEEGNAQVRDTSVTDFVAYLLQIDSQLLIKSLVERIMETNHGMKRGSVYHVPLNIVQADAVRDALAKAIYNNLFDWIVSRVNKSLQAFPGAEKSIGILDIYGFEIFEHNSFEQICINYVNEKLQQIFIQLTLKSEQETYEREKIQWTPIKYFDNKVVCDLIEARRPPGIFAAMNDSVATAHADSNAADQAFAQRLNLFTTNPHFDLRSNKFVIKHYAGDVTYDIDGITDKNKDQLQKDLVELIGTTTNTFLATIFPDTVDRESKRRPPTAGDKIIKSANDLVETLSKAQPSYIRTIKPNETKSPNDYDDRQVLHQIKYLGLQENVRIRRAGFAYRQVFEKFVERFYLLSPHCSYAGDYTWQGDTLDAVKYILQDSSIPQQEYQLGVTSVFIKTPETLFALEHMRDRYWHNMAARIQRAWRRFLQRRIDAATKIQRTIRERKEGNKYEKLRDYGTKVLGGRKERRSMSLLGYRAFMGDYLSCNESKSKGAYIKRQVSIKEKVIFSIHGEALHTKFGRSAQRLKKTFLLTPTTLYIVGQTLVQNAMTYTQDYKIDVRNIQAVSLTNLQDDWVAIKLASSGQPDPLINTYFKTELITHLKRLNDKIQIKIGSAIEYQKKPGKLHSVKCQINESAPKYGDIYKSSTISVRRGNPPNSQVHKKPRKKSSISSGYHASSSQATRRPVSIAAAQHVPTAPASRHSKKPAPPPPGMQNKAATRRSVPNPASTLTASQSNARPSPPTAATRATPAATPAAAAMGSGRQANIPPPPPPPPPSSKPKEPMFEAAYDFPGSGSPSELPLKKGDVIYITREEPSGWSLGKLLDGSKEGWVPTAYMKPHSGNNNIPTPPQNRDVPKPVLNSVQHDNTSANVIPAAAQASLGDGLANALAARANKMRLESDDEEANEDEEEDDW</sequence>
<reference key="1">
    <citation type="journal article" date="2007" name="Proc. Natl. Acad. Sci. U.S.A.">
        <title>Genome sequencing and comparative analysis of Saccharomyces cerevisiae strain YJM789.</title>
        <authorList>
            <person name="Wei W."/>
            <person name="McCusker J.H."/>
            <person name="Hyman R.W."/>
            <person name="Jones T."/>
            <person name="Ning Y."/>
            <person name="Cao Z."/>
            <person name="Gu Z."/>
            <person name="Bruno D."/>
            <person name="Miranda M."/>
            <person name="Nguyen M."/>
            <person name="Wilhelmy J."/>
            <person name="Komp C."/>
            <person name="Tamse R."/>
            <person name="Wang X."/>
            <person name="Jia P."/>
            <person name="Luedi P."/>
            <person name="Oefner P.J."/>
            <person name="David L."/>
            <person name="Dietrich F.S."/>
            <person name="Li Y."/>
            <person name="Davis R.W."/>
            <person name="Steinmetz L.M."/>
        </authorList>
    </citation>
    <scope>NUCLEOTIDE SEQUENCE [LARGE SCALE GENOMIC DNA]</scope>
    <source>
        <strain>YJM789</strain>
    </source>
</reference>
<gene>
    <name type="primary">MYO5</name>
    <name type="ORF">SCY_4278</name>
</gene>
<feature type="chain" id="PRO_0000338566" description="Myosin-5">
    <location>
        <begin position="1"/>
        <end position="1219"/>
    </location>
</feature>
<feature type="domain" description="Myosin motor" evidence="5">
    <location>
        <begin position="36"/>
        <end position="715"/>
    </location>
</feature>
<feature type="domain" description="IQ 1">
    <location>
        <begin position="719"/>
        <end position="739"/>
    </location>
</feature>
<feature type="domain" description="IQ 2">
    <location>
        <begin position="740"/>
        <end position="765"/>
    </location>
</feature>
<feature type="domain" description="TH1" evidence="6">
    <location>
        <begin position="771"/>
        <end position="961"/>
    </location>
</feature>
<feature type="domain" description="SH3" evidence="4">
    <location>
        <begin position="1085"/>
        <end position="1147"/>
    </location>
</feature>
<feature type="region of interest" description="Disordered" evidence="7">
    <location>
        <begin position="1"/>
        <end position="20"/>
    </location>
</feature>
<feature type="region of interest" description="Actin-binding" evidence="1">
    <location>
        <begin position="404"/>
        <end position="486"/>
    </location>
</feature>
<feature type="region of interest" description="Disordered" evidence="7">
    <location>
        <begin position="951"/>
        <end position="1106"/>
    </location>
</feature>
<feature type="region of interest" description="Disordered" evidence="7">
    <location>
        <begin position="1139"/>
        <end position="1167"/>
    </location>
</feature>
<feature type="compositionally biased region" description="Basic residues" evidence="7">
    <location>
        <begin position="1"/>
        <end position="12"/>
    </location>
</feature>
<feature type="compositionally biased region" description="Polar residues" evidence="7">
    <location>
        <begin position="951"/>
        <end position="964"/>
    </location>
</feature>
<feature type="compositionally biased region" description="Low complexity" evidence="7">
    <location>
        <begin position="974"/>
        <end position="984"/>
    </location>
</feature>
<feature type="compositionally biased region" description="Polar residues" evidence="7">
    <location>
        <begin position="1030"/>
        <end position="1041"/>
    </location>
</feature>
<feature type="compositionally biased region" description="Low complexity" evidence="7">
    <location>
        <begin position="1048"/>
        <end position="1063"/>
    </location>
</feature>
<feature type="compositionally biased region" description="Pro residues" evidence="7">
    <location>
        <begin position="1072"/>
        <end position="1083"/>
    </location>
</feature>
<feature type="binding site" evidence="3">
    <location>
        <begin position="129"/>
        <end position="136"/>
    </location>
    <ligand>
        <name>ATP</name>
        <dbReference type="ChEBI" id="CHEBI:30616"/>
    </ligand>
</feature>
<feature type="modified residue" description="Phosphoserine" evidence="2">
    <location>
        <position position="357"/>
    </location>
</feature>
<feature type="modified residue" description="Phosphotyrosine" evidence="2">
    <location>
        <position position="359"/>
    </location>
</feature>
<feature type="modified residue" description="Phosphoserine" evidence="2">
    <location>
        <position position="777"/>
    </location>
</feature>
<feature type="modified residue" description="Phosphoserine" evidence="2">
    <location>
        <position position="992"/>
    </location>
</feature>
<feature type="modified residue" description="Phosphoserine" evidence="2">
    <location>
        <position position="1205"/>
    </location>
</feature>
<keyword id="KW-0009">Actin-binding</keyword>
<keyword id="KW-0067">ATP-binding</keyword>
<keyword id="KW-0963">Cytoplasm</keyword>
<keyword id="KW-0206">Cytoskeleton</keyword>
<keyword id="KW-0378">Hydrolase</keyword>
<keyword id="KW-0505">Motor protein</keyword>
<keyword id="KW-0518">Myosin</keyword>
<keyword id="KW-0547">Nucleotide-binding</keyword>
<keyword id="KW-0597">Phosphoprotein</keyword>
<keyword id="KW-0677">Repeat</keyword>
<keyword id="KW-0728">SH3 domain</keyword>
<proteinExistence type="inferred from homology"/>
<organism>
    <name type="scientific">Saccharomyces cerevisiae (strain YJM789)</name>
    <name type="common">Baker's yeast</name>
    <dbReference type="NCBI Taxonomy" id="307796"/>
    <lineage>
        <taxon>Eukaryota</taxon>
        <taxon>Fungi</taxon>
        <taxon>Dikarya</taxon>
        <taxon>Ascomycota</taxon>
        <taxon>Saccharomycotina</taxon>
        <taxon>Saccharomycetes</taxon>
        <taxon>Saccharomycetales</taxon>
        <taxon>Saccharomycetaceae</taxon>
        <taxon>Saccharomyces</taxon>
    </lineage>
</organism>
<name>MYO5_YEAS7</name>
<dbReference type="EMBL" id="AAFW02000020">
    <property type="protein sequence ID" value="EDN64496.1"/>
    <property type="molecule type" value="Genomic_DNA"/>
</dbReference>
<dbReference type="SMR" id="A6ZMG6"/>
<dbReference type="HOGENOM" id="CLU_000192_7_6_1"/>
<dbReference type="Proteomes" id="UP000007060">
    <property type="component" value="Unassembled WGS sequence"/>
</dbReference>
<dbReference type="GO" id="GO:0030479">
    <property type="term" value="C:actin cortical patch"/>
    <property type="evidence" value="ECO:0007669"/>
    <property type="project" value="UniProtKB-SubCell"/>
</dbReference>
<dbReference type="GO" id="GO:0051286">
    <property type="term" value="C:cell tip"/>
    <property type="evidence" value="ECO:0007669"/>
    <property type="project" value="TreeGrafter"/>
</dbReference>
<dbReference type="GO" id="GO:0016459">
    <property type="term" value="C:myosin complex"/>
    <property type="evidence" value="ECO:0007669"/>
    <property type="project" value="UniProtKB-KW"/>
</dbReference>
<dbReference type="GO" id="GO:0005886">
    <property type="term" value="C:plasma membrane"/>
    <property type="evidence" value="ECO:0007669"/>
    <property type="project" value="TreeGrafter"/>
</dbReference>
<dbReference type="GO" id="GO:0051015">
    <property type="term" value="F:actin filament binding"/>
    <property type="evidence" value="ECO:0007669"/>
    <property type="project" value="TreeGrafter"/>
</dbReference>
<dbReference type="GO" id="GO:0005524">
    <property type="term" value="F:ATP binding"/>
    <property type="evidence" value="ECO:0007669"/>
    <property type="project" value="UniProtKB-KW"/>
</dbReference>
<dbReference type="GO" id="GO:0016787">
    <property type="term" value="F:hydrolase activity"/>
    <property type="evidence" value="ECO:0007669"/>
    <property type="project" value="UniProtKB-KW"/>
</dbReference>
<dbReference type="GO" id="GO:0000146">
    <property type="term" value="F:microfilament motor activity"/>
    <property type="evidence" value="ECO:0007669"/>
    <property type="project" value="TreeGrafter"/>
</dbReference>
<dbReference type="GO" id="GO:0051666">
    <property type="term" value="P:actin cortical patch localization"/>
    <property type="evidence" value="ECO:0007669"/>
    <property type="project" value="TreeGrafter"/>
</dbReference>
<dbReference type="GO" id="GO:0007015">
    <property type="term" value="P:actin filament organization"/>
    <property type="evidence" value="ECO:0007669"/>
    <property type="project" value="TreeGrafter"/>
</dbReference>
<dbReference type="GO" id="GO:0006897">
    <property type="term" value="P:endocytosis"/>
    <property type="evidence" value="ECO:0007669"/>
    <property type="project" value="TreeGrafter"/>
</dbReference>
<dbReference type="CDD" id="cd01378">
    <property type="entry name" value="MYSc_Myo1"/>
    <property type="match status" value="1"/>
</dbReference>
<dbReference type="CDD" id="cd11858">
    <property type="entry name" value="SH3_Myosin-I_fungi"/>
    <property type="match status" value="1"/>
</dbReference>
<dbReference type="FunFam" id="1.10.10.820:FF:000001">
    <property type="entry name" value="Myosin heavy chain"/>
    <property type="match status" value="1"/>
</dbReference>
<dbReference type="FunFam" id="1.20.120.720:FF:000015">
    <property type="entry name" value="Myosin I"/>
    <property type="match status" value="1"/>
</dbReference>
<dbReference type="FunFam" id="1.20.5.4820:FF:000004">
    <property type="entry name" value="Myosin IE"/>
    <property type="match status" value="1"/>
</dbReference>
<dbReference type="FunFam" id="1.20.58.530:FF:000007">
    <property type="entry name" value="Myosin IE"/>
    <property type="match status" value="1"/>
</dbReference>
<dbReference type="Gene3D" id="1.10.10.820">
    <property type="match status" value="1"/>
</dbReference>
<dbReference type="Gene3D" id="1.20.5.4820">
    <property type="match status" value="1"/>
</dbReference>
<dbReference type="Gene3D" id="1.20.58.530">
    <property type="match status" value="1"/>
</dbReference>
<dbReference type="Gene3D" id="3.40.850.10">
    <property type="entry name" value="Kinesin motor domain"/>
    <property type="match status" value="1"/>
</dbReference>
<dbReference type="Gene3D" id="1.20.120.720">
    <property type="entry name" value="Myosin VI head, motor domain, U50 subdomain"/>
    <property type="match status" value="1"/>
</dbReference>
<dbReference type="Gene3D" id="2.30.30.40">
    <property type="entry name" value="SH3 Domains"/>
    <property type="match status" value="1"/>
</dbReference>
<dbReference type="InterPro" id="IPR035535">
    <property type="entry name" value="Fungal_myosin-I_SH3"/>
</dbReference>
<dbReference type="InterPro" id="IPR036961">
    <property type="entry name" value="Kinesin_motor_dom_sf"/>
</dbReference>
<dbReference type="InterPro" id="IPR001609">
    <property type="entry name" value="Myosin_head_motor_dom-like"/>
</dbReference>
<dbReference type="InterPro" id="IPR010926">
    <property type="entry name" value="Myosin_TH1"/>
</dbReference>
<dbReference type="InterPro" id="IPR036072">
    <property type="entry name" value="MYSc_Myo1"/>
</dbReference>
<dbReference type="InterPro" id="IPR027417">
    <property type="entry name" value="P-loop_NTPase"/>
</dbReference>
<dbReference type="InterPro" id="IPR036028">
    <property type="entry name" value="SH3-like_dom_sf"/>
</dbReference>
<dbReference type="InterPro" id="IPR001452">
    <property type="entry name" value="SH3_domain"/>
</dbReference>
<dbReference type="PANTHER" id="PTHR13140">
    <property type="entry name" value="MYOSIN"/>
    <property type="match status" value="1"/>
</dbReference>
<dbReference type="PANTHER" id="PTHR13140:SF837">
    <property type="entry name" value="MYOSIN-3-RELATED"/>
    <property type="match status" value="1"/>
</dbReference>
<dbReference type="Pfam" id="PF00063">
    <property type="entry name" value="Myosin_head"/>
    <property type="match status" value="1"/>
</dbReference>
<dbReference type="Pfam" id="PF06017">
    <property type="entry name" value="Myosin_TH1"/>
    <property type="match status" value="1"/>
</dbReference>
<dbReference type="Pfam" id="PF00018">
    <property type="entry name" value="SH3_1"/>
    <property type="match status" value="1"/>
</dbReference>
<dbReference type="PRINTS" id="PR00193">
    <property type="entry name" value="MYOSINHEAVY"/>
</dbReference>
<dbReference type="SMART" id="SM00242">
    <property type="entry name" value="MYSc"/>
    <property type="match status" value="1"/>
</dbReference>
<dbReference type="SMART" id="SM00326">
    <property type="entry name" value="SH3"/>
    <property type="match status" value="1"/>
</dbReference>
<dbReference type="SUPFAM" id="SSF52540">
    <property type="entry name" value="P-loop containing nucleoside triphosphate hydrolases"/>
    <property type="match status" value="1"/>
</dbReference>
<dbReference type="SUPFAM" id="SSF50044">
    <property type="entry name" value="SH3-domain"/>
    <property type="match status" value="1"/>
</dbReference>
<dbReference type="PROSITE" id="PS51456">
    <property type="entry name" value="MYOSIN_MOTOR"/>
    <property type="match status" value="1"/>
</dbReference>
<dbReference type="PROSITE" id="PS50002">
    <property type="entry name" value="SH3"/>
    <property type="match status" value="1"/>
</dbReference>
<dbReference type="PROSITE" id="PS51757">
    <property type="entry name" value="TH1"/>
    <property type="match status" value="1"/>
</dbReference>
<accession>A6ZMG6</accession>
<comment type="function">
    <text evidence="1">One of two redundant type-I myosins implicated in the organization of the actin cytoskeleton. Required for proper actin cytoskeleton polarization and for the internalization step in endocytosis. At the cell cortex, assembles in patch-like structures together with proteins from the actin-polymerizing machinery and promotes actin assembly. Functions redundantly with LAS17 as actin nucleation-promoting factor (NPF) for the Arp2/3 complex. Motor domain phosphorylation by PAK kinases CLA4 and STE20 promotes CDC42-regulated actin assembly. Functions together with the NPF PAN1 in late stages of endocytosis. Motor domain phosphorylation by PDK1 kinases PKH1 and PKH2, and by SGK kinases YPK1 and YPK2, promotes ligand-induced, but not constitutive endocytosis of the G protein-coupled receptor STE2 (By similarity).</text>
</comment>
<comment type="subunit">
    <text evidence="1">Interacts (via myosin motor domain) with SHE4; this interaction is important for proper localization and may regulate the interaction of the motor domain with actin. Interacts (via SH3 domain) with VRP1; this interaction is required for localization to sites of polarized growth and may regulate the interaction of the tail domain with actin. Interacts (via SH3 domain) with PAN1; this interaction is important for late stages of endocytopsis. Interacts (via SH3 domain) with BBC1 and LAS17. Interacts (via C-terminal acidic tail) with ARC19 and ARC40; ARC19 and ARC40 are Arp2/3 complex subunits. Interacts with BZZ1, PKH1, PKH2, YPK1 and YPK2 (By similarity).</text>
</comment>
<comment type="subcellular location">
    <subcellularLocation>
        <location evidence="1">Cytoplasm</location>
        <location evidence="1">Cytoskeleton</location>
        <location evidence="1">Actin patch</location>
    </subcellularLocation>
    <text evidence="1">Localizes to cortical patch-like protein structures that assemble actin patches. Enriched at sites of polarized growth (By similarity).</text>
</comment>
<comment type="domain">
    <text evidence="1">The myosin motor domain displays actin-stimulated ATPase activity and generates a mechanochemical force.</text>
</comment>
<comment type="domain">
    <text evidence="1">The tail domain participates in molecular interactions that specify the role of the motor domain (By similarity). It is composed of several tail homology (TH) domains, namely a putative phospholipid-binding myosin tail domain (also named TH1), an Ala- and Pro-rich domain (TH2), followed by an SH3 domain and a C-terminal acidic domain (TH3).</text>
</comment>
<comment type="PTM">
    <text evidence="1">Phosphorylation of the TEDS site (Ser-357) is required for the polarization of the actin cytoskeleton and for ligand-induced, but not for constitutive internalization of STE2. Phosphorylation probably activates the myosin-I ATPase activity. Ser-357 is phosphorylated by YPK2 in vitro (By similarity).</text>
</comment>
<comment type="similarity">
    <text evidence="8">Belongs to the TRAFAC class myosin-kinesin ATPase superfamily. Myosin family.</text>
</comment>
<protein>
    <recommendedName>
        <fullName>Myosin-5</fullName>
    </recommendedName>
    <alternativeName>
        <fullName>Actin-dependent myosin-I MYO5</fullName>
    </alternativeName>
    <alternativeName>
        <fullName>Class I unconventional myosin MYO5</fullName>
    </alternativeName>
    <alternativeName>
        <fullName>Type I myosin MYO5</fullName>
    </alternativeName>
</protein>